<name>LLDD_PSEA8</name>
<feature type="chain" id="PRO_0000383433" description="L-lactate dehydrogenase">
    <location>
        <begin position="1"/>
        <end position="381"/>
    </location>
</feature>
<feature type="domain" description="FMN hydroxy acid dehydrogenase" evidence="1">
    <location>
        <begin position="1"/>
        <end position="380"/>
    </location>
</feature>
<feature type="active site" description="Proton acceptor" evidence="1">
    <location>
        <position position="275"/>
    </location>
</feature>
<feature type="binding site" evidence="1">
    <location>
        <position position="24"/>
    </location>
    <ligand>
        <name>substrate</name>
    </ligand>
</feature>
<feature type="binding site" evidence="1">
    <location>
        <position position="106"/>
    </location>
    <ligand>
        <name>FMN</name>
        <dbReference type="ChEBI" id="CHEBI:58210"/>
    </ligand>
</feature>
<feature type="binding site" evidence="1">
    <location>
        <position position="127"/>
    </location>
    <ligand>
        <name>FMN</name>
        <dbReference type="ChEBI" id="CHEBI:58210"/>
    </ligand>
</feature>
<feature type="binding site" evidence="1">
    <location>
        <position position="129"/>
    </location>
    <ligand>
        <name>substrate</name>
    </ligand>
</feature>
<feature type="binding site" evidence="1">
    <location>
        <position position="155"/>
    </location>
    <ligand>
        <name>FMN</name>
        <dbReference type="ChEBI" id="CHEBI:58210"/>
    </ligand>
</feature>
<feature type="binding site" evidence="1">
    <location>
        <position position="164"/>
    </location>
    <ligand>
        <name>substrate</name>
    </ligand>
</feature>
<feature type="binding site" evidence="1">
    <location>
        <position position="251"/>
    </location>
    <ligand>
        <name>FMN</name>
        <dbReference type="ChEBI" id="CHEBI:58210"/>
    </ligand>
</feature>
<feature type="binding site" evidence="1">
    <location>
        <position position="278"/>
    </location>
    <ligand>
        <name>substrate</name>
    </ligand>
</feature>
<feature type="binding site" evidence="1">
    <location>
        <begin position="306"/>
        <end position="330"/>
    </location>
    <ligand>
        <name>FMN</name>
        <dbReference type="ChEBI" id="CHEBI:58210"/>
    </ligand>
</feature>
<comment type="function">
    <text evidence="1">Catalyzes the conversion of L-lactate to pyruvate. Is coupled to the respiratory chain.</text>
</comment>
<comment type="catalytic activity">
    <reaction evidence="1">
        <text>(S)-lactate + A = pyruvate + AH2</text>
        <dbReference type="Rhea" id="RHEA:45816"/>
        <dbReference type="ChEBI" id="CHEBI:13193"/>
        <dbReference type="ChEBI" id="CHEBI:15361"/>
        <dbReference type="ChEBI" id="CHEBI:16651"/>
        <dbReference type="ChEBI" id="CHEBI:17499"/>
    </reaction>
</comment>
<comment type="cofactor">
    <cofactor evidence="1">
        <name>FMN</name>
        <dbReference type="ChEBI" id="CHEBI:58210"/>
    </cofactor>
</comment>
<comment type="subunit">
    <text evidence="1">Homotetramer.</text>
</comment>
<comment type="subcellular location">
    <subcellularLocation>
        <location evidence="1">Cell inner membrane</location>
        <topology evidence="1">Peripheral membrane protein</topology>
    </subcellularLocation>
</comment>
<comment type="similarity">
    <text evidence="1">Belongs to the FMN-dependent alpha-hydroxy acid dehydrogenase family.</text>
</comment>
<sequence length="381" mass="41122">MIISASTDYRAAAQRKLPPFLFHYIDGGAYAEYTLRRNVEDLSAIALRQRVLKNMSELSLETRLFDETLAMPVALAPVGLTGMYARRGEVQAARAAAAKGVPFTLSTVSVCPIEEVAPAIDRPMWFQLYVLKDRGFMRNALERAKAAGVTTLVFTVDMPVPGARYRDAHSGMSGPYAAPRRILQAMTHPAWAWDVGLLGKPHDLGNISAYRGNPTGLEDYIGWLGANFDPSISWKDLEWIREFWDGPMVIKGILDPEDARDAVKFGADGIVVSNHGGRQLDGVLSSARALPAIADAVKGELAILADSGIRTGLDVVRMIALGADSVLLGRAFVYALAAAGEAGVRNLLELIEKEMRVAMVLTGAKSIGEISADSLVRELGA</sequence>
<gene>
    <name evidence="1" type="primary">lldD</name>
    <name type="ordered locus">PLES_51561</name>
</gene>
<evidence type="ECO:0000255" key="1">
    <source>
        <dbReference type="HAMAP-Rule" id="MF_01559"/>
    </source>
</evidence>
<dbReference type="EC" id="1.1.-.-" evidence="1"/>
<dbReference type="EMBL" id="FM209186">
    <property type="protein sequence ID" value="CAW29910.1"/>
    <property type="molecule type" value="Genomic_DNA"/>
</dbReference>
<dbReference type="RefSeq" id="WP_003100494.1">
    <property type="nucleotide sequence ID" value="NC_011770.1"/>
</dbReference>
<dbReference type="SMR" id="B7V1I3"/>
<dbReference type="KEGG" id="pag:PLES_51561"/>
<dbReference type="HOGENOM" id="CLU_020639_0_0_6"/>
<dbReference type="GO" id="GO:0005886">
    <property type="term" value="C:plasma membrane"/>
    <property type="evidence" value="ECO:0007669"/>
    <property type="project" value="UniProtKB-SubCell"/>
</dbReference>
<dbReference type="GO" id="GO:0010181">
    <property type="term" value="F:FMN binding"/>
    <property type="evidence" value="ECO:0007669"/>
    <property type="project" value="InterPro"/>
</dbReference>
<dbReference type="GO" id="GO:0004459">
    <property type="term" value="F:L-lactate dehydrogenase activity"/>
    <property type="evidence" value="ECO:0007669"/>
    <property type="project" value="UniProtKB-UniRule"/>
</dbReference>
<dbReference type="GO" id="GO:0009060">
    <property type="term" value="P:aerobic respiration"/>
    <property type="evidence" value="ECO:0007669"/>
    <property type="project" value="TreeGrafter"/>
</dbReference>
<dbReference type="GO" id="GO:0006089">
    <property type="term" value="P:lactate metabolic process"/>
    <property type="evidence" value="ECO:0007669"/>
    <property type="project" value="UniProtKB-UniRule"/>
</dbReference>
<dbReference type="CDD" id="cd02809">
    <property type="entry name" value="alpha_hydroxyacid_oxid_FMN"/>
    <property type="match status" value="1"/>
</dbReference>
<dbReference type="FunFam" id="3.20.20.70:FF:000029">
    <property type="entry name" value="L-lactate dehydrogenase"/>
    <property type="match status" value="1"/>
</dbReference>
<dbReference type="Gene3D" id="3.20.20.70">
    <property type="entry name" value="Aldolase class I"/>
    <property type="match status" value="1"/>
</dbReference>
<dbReference type="HAMAP" id="MF_01559">
    <property type="entry name" value="L_lact_dehydr"/>
    <property type="match status" value="1"/>
</dbReference>
<dbReference type="InterPro" id="IPR013785">
    <property type="entry name" value="Aldolase_TIM"/>
</dbReference>
<dbReference type="InterPro" id="IPR012133">
    <property type="entry name" value="Alpha-hydoxy_acid_DH_FMN"/>
</dbReference>
<dbReference type="InterPro" id="IPR000262">
    <property type="entry name" value="FMN-dep_DH"/>
</dbReference>
<dbReference type="InterPro" id="IPR037396">
    <property type="entry name" value="FMN_HAD"/>
</dbReference>
<dbReference type="InterPro" id="IPR008259">
    <property type="entry name" value="FMN_hydac_DH_AS"/>
</dbReference>
<dbReference type="InterPro" id="IPR020920">
    <property type="entry name" value="LldD"/>
</dbReference>
<dbReference type="NCBIfam" id="NF033901">
    <property type="entry name" value="L_lactate_LldD"/>
    <property type="match status" value="1"/>
</dbReference>
<dbReference type="NCBIfam" id="NF008398">
    <property type="entry name" value="PRK11197.1"/>
    <property type="match status" value="1"/>
</dbReference>
<dbReference type="PANTHER" id="PTHR10578:SF85">
    <property type="entry name" value="L-LACTATE DEHYDROGENASE"/>
    <property type="match status" value="1"/>
</dbReference>
<dbReference type="PANTHER" id="PTHR10578">
    <property type="entry name" value="S -2-HYDROXY-ACID OXIDASE-RELATED"/>
    <property type="match status" value="1"/>
</dbReference>
<dbReference type="Pfam" id="PF01070">
    <property type="entry name" value="FMN_dh"/>
    <property type="match status" value="1"/>
</dbReference>
<dbReference type="PIRSF" id="PIRSF000138">
    <property type="entry name" value="Al-hdrx_acd_dh"/>
    <property type="match status" value="1"/>
</dbReference>
<dbReference type="SUPFAM" id="SSF51395">
    <property type="entry name" value="FMN-linked oxidoreductases"/>
    <property type="match status" value="1"/>
</dbReference>
<dbReference type="PROSITE" id="PS00557">
    <property type="entry name" value="FMN_HYDROXY_ACID_DH_1"/>
    <property type="match status" value="1"/>
</dbReference>
<dbReference type="PROSITE" id="PS51349">
    <property type="entry name" value="FMN_HYDROXY_ACID_DH_2"/>
    <property type="match status" value="1"/>
</dbReference>
<reference key="1">
    <citation type="journal article" date="2009" name="Genome Res.">
        <title>Newly introduced genomic prophage islands are critical determinants of in vivo competitiveness in the Liverpool epidemic strain of Pseudomonas aeruginosa.</title>
        <authorList>
            <person name="Winstanley C."/>
            <person name="Langille M.G.I."/>
            <person name="Fothergill J.L."/>
            <person name="Kukavica-Ibrulj I."/>
            <person name="Paradis-Bleau C."/>
            <person name="Sanschagrin F."/>
            <person name="Thomson N.R."/>
            <person name="Winsor G.L."/>
            <person name="Quail M.A."/>
            <person name="Lennard N."/>
            <person name="Bignell A."/>
            <person name="Clarke L."/>
            <person name="Seeger K."/>
            <person name="Saunders D."/>
            <person name="Harris D."/>
            <person name="Parkhill J."/>
            <person name="Hancock R.E.W."/>
            <person name="Brinkman F.S.L."/>
            <person name="Levesque R.C."/>
        </authorList>
    </citation>
    <scope>NUCLEOTIDE SEQUENCE [LARGE SCALE GENOMIC DNA]</scope>
    <source>
        <strain>LESB58</strain>
    </source>
</reference>
<accession>B7V1I3</accession>
<organism>
    <name type="scientific">Pseudomonas aeruginosa (strain LESB58)</name>
    <dbReference type="NCBI Taxonomy" id="557722"/>
    <lineage>
        <taxon>Bacteria</taxon>
        <taxon>Pseudomonadati</taxon>
        <taxon>Pseudomonadota</taxon>
        <taxon>Gammaproteobacteria</taxon>
        <taxon>Pseudomonadales</taxon>
        <taxon>Pseudomonadaceae</taxon>
        <taxon>Pseudomonas</taxon>
    </lineage>
</organism>
<keyword id="KW-0997">Cell inner membrane</keyword>
<keyword id="KW-1003">Cell membrane</keyword>
<keyword id="KW-0285">Flavoprotein</keyword>
<keyword id="KW-0288">FMN</keyword>
<keyword id="KW-0472">Membrane</keyword>
<keyword id="KW-0560">Oxidoreductase</keyword>
<proteinExistence type="inferred from homology"/>
<protein>
    <recommendedName>
        <fullName evidence="1">L-lactate dehydrogenase</fullName>
        <ecNumber evidence="1">1.1.-.-</ecNumber>
    </recommendedName>
</protein>